<comment type="function">
    <text evidence="1 9 11 12">Serine/threonine-protein kinase which is involved in the regulation of a wide variety of ion channels, membrane transporters, cellular enzymes, transcription factors, neuronal excitability, cell growth, proliferation, survival, migration and apoptosis. Plays an important role in cellular stress response. Contributes to regulation of renal Na(+) retention, renal K(+) elimination, salt appetite, gastric acid secretion, intestinal Na(+)/H(+) exchange and nutrient transport, insulin-dependent salt sensitivity of blood pressure, salt sensitivity of peripheral glucose uptake, cardiac repolarization and memory consolidation. Up-regulates Na(+) channels: SCNN1A/ENAC, SCN5A and ASIC1/ACCN2, K(+) channels: KCNJ1/ROMK1, KCNA1-5, KCNQ1-5 and KCNE1, epithelial Ca(2+) channels: TRPV5 and TRPV6, chloride channels: BSND, CLCN2 and CFTR, glutamate transporters: SLC1A3/EAAT1, SLC1A2 /EAAT2, SLC1A1/EAAT3, SLC1A6/EAAT4 and SLC1A7/EAAT5, amino acid transporters: SLC1A5/ASCT2, SLC38A1/SN1 and SLC6A19, creatine transporter: SLC6A8, Na(+)/dicarboxylate cotransporter: SLC13A2/NADC1, Na(+)-dependent phosphate cotransporter: SLC34A2/NAPI-2B, glutamate receptor: GRIK2/GLUR6. Up-regulates carriers: SLC9A3/NHE3, SLC12A1/NKCC2, SLC12A3/NCC, SLC5A3/SMIT, SLC2A1/GLUT1, SLC5A1/SGLT1 and SLC15A2/PEPT2. Regulates enzymes: GSK3A/B, PMM2 and Na(+)/K(+) ATPase, and transcription factors: CTNNB1 and nuclear factor NF-kappa-B. Stimulates sodium transport into epithelial cells by enhancing the stability and expression of SCNN1A/ENAC. This is achieved by phosphorylating the NEDD4L ubiquitin E3 ligase, promoting its interaction with 14-3-3 proteins, thereby preventing it from binding to SCNN1A/ENAC and targeting it for degradation. Regulates store-operated Ca(+2) entry (SOCE) by stimulating ORAI1 and STIM1. Regulates KCNJ1/ROMK1 directly via its phosphorylation or indirectly via increased interaction with SLC9A3R2/NHERF2. Phosphorylates MDM2 and activates MDM2-dependent ubiquitination of p53/TP53. Phosphorylates SLC2A4/GLUT4 and up-regulates its activity. Phosphorylates APBB1/FE65 and promotes its localization to the nucleus. Phosphorylates FBXW7 and plays an inhibitory role in the NOTCH1 signaling. Phosphorylates FOXO1 resulting in its relocalization from the nucleus to the cytoplasm. Phosphorylates FOXO3, promoting its exit from the nucleus and interference with FOXO3-dependent transcription. Phosphorylates BRAF and MAP3K3/MEKK3 and inhibits their activity. Phosphorylates SLC9A3/NHE3 in response to dexamethasone, resulting in its activation and increased localization at the cell membrane. Phosphorylates CREB1. Necessary for vascular remodeling during angiogenesis (By similarity). Phosphorylates MAPT/TAU and mediates microtubule depolymerization and neurite formation in hippocampal neurons. Phosphorylates MAPK1/ERK2 and activates it by enhancing its interaction with MAP2K1/MEK1 and MAP2K2/MEK2. May also play an important role in the development of particular groups of neurons in the postnatal brain.</text>
</comment>
<comment type="catalytic activity">
    <reaction>
        <text>L-seryl-[protein] + ATP = O-phospho-L-seryl-[protein] + ADP + H(+)</text>
        <dbReference type="Rhea" id="RHEA:17989"/>
        <dbReference type="Rhea" id="RHEA-COMP:9863"/>
        <dbReference type="Rhea" id="RHEA-COMP:11604"/>
        <dbReference type="ChEBI" id="CHEBI:15378"/>
        <dbReference type="ChEBI" id="CHEBI:29999"/>
        <dbReference type="ChEBI" id="CHEBI:30616"/>
        <dbReference type="ChEBI" id="CHEBI:83421"/>
        <dbReference type="ChEBI" id="CHEBI:456216"/>
        <dbReference type="EC" id="2.7.11.1"/>
    </reaction>
</comment>
<comment type="catalytic activity">
    <reaction>
        <text>L-threonyl-[protein] + ATP = O-phospho-L-threonyl-[protein] + ADP + H(+)</text>
        <dbReference type="Rhea" id="RHEA:46608"/>
        <dbReference type="Rhea" id="RHEA-COMP:11060"/>
        <dbReference type="Rhea" id="RHEA-COMP:11605"/>
        <dbReference type="ChEBI" id="CHEBI:15378"/>
        <dbReference type="ChEBI" id="CHEBI:30013"/>
        <dbReference type="ChEBI" id="CHEBI:30616"/>
        <dbReference type="ChEBI" id="CHEBI:61977"/>
        <dbReference type="ChEBI" id="CHEBI:456216"/>
        <dbReference type="EC" id="2.7.11.1"/>
    </reaction>
</comment>
<comment type="activity regulation">
    <text evidence="2 10">Two specific sites, one in the kinase domain (Thr-256) and the other in the C-terminal regulatory region (Ser-421), need to be phosphorylated for its full activation (PubMed:16006511). Phosphorylation at Ser-396 and Ser-400 are also essential for its activity (By similarity). Activated by WNK1, WNK2, WNK3 and WNK4 (PubMed:16006511).</text>
</comment>
<comment type="subunit">
    <text evidence="1 11 12">Homodimer; disulfide-linked. Forms a trimeric complex with FBXW7 and NOTCH1. Interacts with MAPK3/ERK1, MAPK1/ERK2, MAP2K1/MEK1, MAP2K2/MEK2, NEDD4, NEDD4L, MAPK7, CREB1, SLC9A3R2/NHERF2 and KCNJ1/ROMK1. Associates with the mammalian target of rapamycin complex 2 (mTORC2) via an interaction with MAPKAP1/SIN1 (By similarity). Interacts with MAPT/TAU.</text>
</comment>
<comment type="subcellular location">
    <subcellularLocation>
        <location evidence="1">Cytoplasm</location>
    </subcellularLocation>
    <subcellularLocation>
        <location evidence="1">Nucleus</location>
    </subcellularLocation>
    <subcellularLocation>
        <location evidence="1">Endoplasmic reticulum membrane</location>
    </subcellularLocation>
    <subcellularLocation>
        <location evidence="1">Cell membrane</location>
    </subcellularLocation>
    <subcellularLocation>
        <location evidence="1">Mitochondrion</location>
    </subcellularLocation>
    <text evidence="1">The subcellular localization is controlled by the cell cycle, as well as by exposure to specific hormones and environmental stress stimuli. In proliferating cells, it shuttles between the nucleus and cytoplasm in synchrony with the cell cycle, and in serum/growth factor-stimulated cells it resides in the nucleus. In contrast, after exposure to environmental stress or treatment with glucocorticoids, it is detected in the cytoplasm and with certain stress conditions is associated with the mitochondria. In osmoregulation through the epithelial sodium channel, it can be localized to the cytoplasmic surface of the cell membrane. Nuclear, upon phosphorylation (By similarity).</text>
</comment>
<comment type="tissue specificity">
    <text evidence="7">Expressed in most tissues with highest levels in the ovary, thymus and lung. In the kidney, expressed within glomeruli of the cortex, at low levels in outer medulla and moderate levels in inner medulla and papilla.</text>
</comment>
<comment type="induction">
    <text evidence="7 13 14 15">Up-regulated by aldosterone in distal nephron (tubules) of the kidney. By dexamethasone and serum. By tumor suppressor p53 in mammary epithelial tumor cells. By FSH in granulosa cells. By injury to the central nervous system.</text>
</comment>
<comment type="PTM">
    <text evidence="2 10">Regulated by phosphorylation. Activated by phosphorylation on Ser-421 by mTORC2, transforming it into a substrate for PDPK1 which phosphorylates it on Thr-256 (PubMed:16006511). Phosphorylation on Ser-396 and Ser-400 are also essential for its activity (By similarity). Phosphorylation on Ser-78 by MAPK7 is required for growth factor-induced cell cycle progression (PubMed:16006511).</text>
</comment>
<comment type="PTM">
    <text evidence="1">Ubiquitinated by NEDD4L; which promotes proteasomal degradation. Ubiquitinated by SYVN1 at the endoplasmic reticulum; which promotes rapid proteasomal degradation and maintains a high turnover rate in resting cells (By similarity).</text>
</comment>
<comment type="similarity">
    <text evidence="16">Belongs to the protein kinase superfamily. AGC Ser/Thr protein kinase family.</text>
</comment>
<evidence type="ECO:0000250" key="1"/>
<evidence type="ECO:0000250" key="2">
    <source>
        <dbReference type="UniProtKB" id="O00141"/>
    </source>
</evidence>
<evidence type="ECO:0000255" key="3">
    <source>
        <dbReference type="PROSITE-ProRule" id="PRU00159"/>
    </source>
</evidence>
<evidence type="ECO:0000255" key="4">
    <source>
        <dbReference type="PROSITE-ProRule" id="PRU00618"/>
    </source>
</evidence>
<evidence type="ECO:0000255" key="5">
    <source>
        <dbReference type="PROSITE-ProRule" id="PRU10027"/>
    </source>
</evidence>
<evidence type="ECO:0000256" key="6">
    <source>
        <dbReference type="SAM" id="MobiDB-lite"/>
    </source>
</evidence>
<evidence type="ECO:0000269" key="7">
    <source>
    </source>
</evidence>
<evidence type="ECO:0000269" key="8">
    <source>
    </source>
</evidence>
<evidence type="ECO:0000269" key="9">
    <source>
    </source>
</evidence>
<evidence type="ECO:0000269" key="10">
    <source>
    </source>
</evidence>
<evidence type="ECO:0000269" key="11">
    <source>
    </source>
</evidence>
<evidence type="ECO:0000269" key="12">
    <source>
    </source>
</evidence>
<evidence type="ECO:0000269" key="13">
    <source>
    </source>
</evidence>
<evidence type="ECO:0000269" key="14">
    <source>
    </source>
</evidence>
<evidence type="ECO:0000269" key="15">
    <source>
    </source>
</evidence>
<evidence type="ECO:0000305" key="16"/>
<reference key="1">
    <citation type="journal article" date="1993" name="Mol. Cell. Biol.">
        <title>Characterization of sgk, a novel member of the serine/threonine protein kinase gene family which is transcriptionally induced by glucocorticoids and serum.</title>
        <authorList>
            <person name="Webster M.K."/>
            <person name="Goya L."/>
            <person name="Ge Y."/>
            <person name="Maiyar A.C."/>
            <person name="Firestone G.L."/>
        </authorList>
    </citation>
    <scope>NUCLEOTIDE SEQUENCE [MRNA]</scope>
    <source>
        <strain>Fischer 344</strain>
    </source>
</reference>
<reference key="2">
    <citation type="journal article" date="1994" name="Brain Res. Mol. Brain Res.">
        <title>Differential expression of sgk mRNA, a member of the Ser/Thr protein kinase gene family, in rat brain after CNS injury.</title>
        <authorList>
            <person name="Imaizumi K."/>
            <person name="Tsuda M."/>
            <person name="Wanaka A."/>
            <person name="Tohyama M."/>
            <person name="Takagi T."/>
        </authorList>
    </citation>
    <scope>INDUCTION BY CNS INJURY</scope>
</reference>
<reference key="3">
    <citation type="journal article" date="1995" name="Recent Prog. Horm. Res.">
        <title>Ovarian cell differentiation: a cascade of multiple hormones, cellular signals, and regulated genes.</title>
        <authorList>
            <person name="Richards J.S."/>
            <person name="Fitzpatrick S.L."/>
            <person name="Clemens J.W."/>
            <person name="Morris J.K."/>
            <person name="Alliston T."/>
            <person name="Sirois J."/>
        </authorList>
    </citation>
    <scope>INDUCTION BY FSH</scope>
</reference>
<reference key="4">
    <citation type="journal article" date="1996" name="J. Biol. Chem.">
        <title>p53 stimulates promoter activity of the sgk. serum/glucocorticoid-inducible serine/threonine protein kinase gene in rodent mammary epithelial cells.</title>
        <authorList>
            <person name="Maiyar A.C."/>
            <person name="Huang A.J."/>
            <person name="Phu P.T."/>
            <person name="Cha H.H."/>
            <person name="Firestone G.L."/>
        </authorList>
    </citation>
    <scope>INDUCTION BY P53</scope>
    <source>
        <tissue>Mammary epithelium</tissue>
    </source>
</reference>
<reference key="5">
    <citation type="journal article" date="1999" name="EMBO J.">
        <title>Serum and glucocorticoid-inducible kinase (SGK) is a target of the PI 3-kinase-stimulated signaling pathway.</title>
        <authorList>
            <person name="Park J."/>
            <person name="Leong M.L."/>
            <person name="Buse P."/>
            <person name="Maiyar A.C."/>
            <person name="Firestone G.L."/>
            <person name="Hemmings B.A."/>
        </authorList>
    </citation>
    <scope>PHOSPHORYLATION AT THR-256</scope>
</reference>
<reference key="6">
    <citation type="journal article" date="1999" name="Proc. Natl. Acad. Sci. U.S.A.">
        <title>Epithelial sodium channel regulated by aldosterone-induced protein sgk.</title>
        <authorList>
            <person name="Chen S.-Y."/>
            <person name="Bhargava A."/>
            <person name="Mastroberardino L."/>
            <person name="Meijer O.C."/>
            <person name="Wang J."/>
            <person name="Buse P."/>
            <person name="Firestone G.L."/>
            <person name="Verrey F."/>
            <person name="Pearce D."/>
        </authorList>
    </citation>
    <scope>INDUCTION</scope>
    <scope>TISSUE SPECIFICITY</scope>
</reference>
<reference key="7">
    <citation type="journal article" date="2004" name="Biochem. Biophys. Res. Commun.">
        <title>Stimulation of the EAAT4 glutamate transporter by SGK protein kinase isoforms and PKB.</title>
        <authorList>
            <person name="Boehmer C."/>
            <person name="Philippin M."/>
            <person name="Rajamanickam J."/>
            <person name="Mack A."/>
            <person name="Broer S."/>
            <person name="Palmada M."/>
            <person name="Lang F."/>
        </authorList>
    </citation>
    <scope>FUNCTION IN REGULATION OF SLC1A6/EAAT4</scope>
</reference>
<reference key="8">
    <citation type="journal article" date="2005" name="Proc. Natl. Acad. Sci. U.S.A.">
        <title>WNK1 activates SGK1 to regulate the epithelial sodium channel.</title>
        <authorList>
            <person name="Xu B.E."/>
            <person name="Stippec S."/>
            <person name="Chu P.Y."/>
            <person name="Lazrak A."/>
            <person name="Li X.J."/>
            <person name="Lee B.H."/>
            <person name="English J.M."/>
            <person name="Ortega B."/>
            <person name="Huang C.L."/>
            <person name="Cobb M.H."/>
        </authorList>
    </citation>
    <scope>ACTIVITY REGULATION</scope>
    <scope>PHOSPHORYLATION AT SER-78; THR-256 AND SER-421</scope>
    <scope>MUTAGENESIS OF SER-78; THR-256 AND SER-421</scope>
</reference>
<reference key="9">
    <citation type="journal article" date="2006" name="Mol. Cell. Biol.">
        <title>Serum- and glucocorticoid-inducible kinase 1 (SGK1) increases neurite formation through microtubule depolymerization by SGK1 and by SGK1 phosphorylation of tau.</title>
        <authorList>
            <person name="Yang Y.C."/>
            <person name="Lin C.H."/>
            <person name="Lee E.H."/>
        </authorList>
    </citation>
    <scope>FUNCTION IN PHOSPHORYLATION OF MAPT/TAU</scope>
    <scope>INTERACTION WITH MAPT/TAU</scope>
</reference>
<reference key="10">
    <citation type="journal article" date="2009" name="J. Hepatol.">
        <title>Protein kinase SGK1 enhances MEK/ERK complex formation through the phosphorylation of ERK2: implication for the positive regulatory role of SGK1 on the ERK function during liver regeneration.</title>
        <authorList>
            <person name="Won M."/>
            <person name="Park K.A."/>
            <person name="Byun H.S."/>
            <person name="Kim Y.R."/>
            <person name="Choi B.L."/>
            <person name="Hong J.H."/>
            <person name="Park J."/>
            <person name="Seok J.H."/>
            <person name="Lee Y.H."/>
            <person name="Cho C.H."/>
            <person name="Song I.S."/>
            <person name="Kim Y.K."/>
            <person name="Shen H.M."/>
            <person name="Hur G.M."/>
        </authorList>
    </citation>
    <scope>FUNCTION IN PHOSPHORYLATION OF MAPK1/ERK2</scope>
    <scope>INTERACTION WITH MAPK3/ERK1; MAPK1/ERK2; MAP2K1/MEK1 AND MAP2K2/MEK2</scope>
</reference>
<gene>
    <name type="primary">Sgk1</name>
    <name type="synonym">Sgk</name>
</gene>
<feature type="chain" id="PRO_0000086645" description="Serine/threonine-protein kinase Sgk1">
    <location>
        <begin position="1"/>
        <end position="430"/>
    </location>
</feature>
<feature type="domain" description="Protein kinase" evidence="3">
    <location>
        <begin position="98"/>
        <end position="354"/>
    </location>
</feature>
<feature type="domain" description="AGC-kinase C-terminal" evidence="4">
    <location>
        <begin position="355"/>
        <end position="430"/>
    </location>
</feature>
<feature type="region of interest" description="Necessary for localization to the mitochondria" evidence="1">
    <location>
        <begin position="1"/>
        <end position="60"/>
    </location>
</feature>
<feature type="region of interest" description="Disordered" evidence="6">
    <location>
        <begin position="66"/>
        <end position="92"/>
    </location>
</feature>
<feature type="short sequence motif" description="Nuclear localization signal" evidence="1">
    <location>
        <begin position="131"/>
        <end position="141"/>
    </location>
</feature>
<feature type="compositionally biased region" description="Polar residues" evidence="6">
    <location>
        <begin position="81"/>
        <end position="91"/>
    </location>
</feature>
<feature type="active site" description="Proton acceptor" evidence="3 5">
    <location>
        <position position="222"/>
    </location>
</feature>
<feature type="binding site" evidence="3">
    <location>
        <begin position="104"/>
        <end position="112"/>
    </location>
    <ligand>
        <name>ATP</name>
        <dbReference type="ChEBI" id="CHEBI:30616"/>
    </ligand>
</feature>
<feature type="binding site" evidence="3">
    <location>
        <position position="127"/>
    </location>
    <ligand>
        <name>ATP</name>
        <dbReference type="ChEBI" id="CHEBI:30616"/>
    </ligand>
</feature>
<feature type="modified residue" description="Phosphoserine" evidence="2">
    <location>
        <position position="74"/>
    </location>
</feature>
<feature type="modified residue" description="Phosphoserine; by MAPK7" evidence="10">
    <location>
        <position position="78"/>
    </location>
</feature>
<feature type="modified residue" description="Phosphothreonine; by PDPK1" evidence="8 10">
    <location>
        <position position="256"/>
    </location>
</feature>
<feature type="modified residue" description="Phosphothreonine; by PKA" evidence="2">
    <location>
        <position position="368"/>
    </location>
</feature>
<feature type="modified residue" description="Phosphoserine" evidence="2">
    <location>
        <position position="396"/>
    </location>
</feature>
<feature type="modified residue" description="Phosphoserine" evidence="2">
    <location>
        <position position="400"/>
    </location>
</feature>
<feature type="modified residue" description="Phosphoserine" evidence="10">
    <location>
        <position position="421"/>
    </location>
</feature>
<feature type="disulfide bond" description="Interchain (with C-258)" evidence="2">
    <location>
        <position position="193"/>
    </location>
</feature>
<feature type="disulfide bond" description="Interchain (with C-193)" evidence="2">
    <location>
        <position position="258"/>
    </location>
</feature>
<feature type="mutagenesis site" description="Does not affect SGK1 activation." evidence="10">
    <original>S</original>
    <variation>A</variation>
    <location>
        <position position="78"/>
    </location>
</feature>
<feature type="mutagenesis site" description="Decreased activation of SGK1." evidence="10">
    <original>T</original>
    <variation>A</variation>
    <location>
        <position position="256"/>
    </location>
</feature>
<feature type="mutagenesis site" description="Mimics phosphorylation; leading to basal activity." evidence="10">
    <original>T</original>
    <variation>D</variation>
    <location>
        <position position="256"/>
    </location>
</feature>
<feature type="mutagenesis site" description="Decreased activation of SGK1." evidence="10">
    <original>S</original>
    <variation>A</variation>
    <location>
        <position position="421"/>
    </location>
</feature>
<feature type="mutagenesis site" description="Mimics phosphorylation; leading to basal activity." evidence="10">
    <original>S</original>
    <variation>D</variation>
    <location>
        <position position="421"/>
    </location>
</feature>
<dbReference type="EC" id="2.7.11.1"/>
<dbReference type="EMBL" id="L01624">
    <property type="protein sequence ID" value="AAA42137.1"/>
    <property type="molecule type" value="mRNA"/>
</dbReference>
<dbReference type="PIR" id="A48094">
    <property type="entry name" value="A48094"/>
</dbReference>
<dbReference type="SMR" id="Q06226"/>
<dbReference type="FunCoup" id="Q06226">
    <property type="interactions" value="466"/>
</dbReference>
<dbReference type="IntAct" id="Q06226">
    <property type="interactions" value="1"/>
</dbReference>
<dbReference type="MINT" id="Q06226"/>
<dbReference type="STRING" id="10116.ENSRNOP00000069545"/>
<dbReference type="iPTMnet" id="Q06226"/>
<dbReference type="PhosphoSitePlus" id="Q06226"/>
<dbReference type="PaxDb" id="10116-ENSRNOP00000057871"/>
<dbReference type="AGR" id="RGD:3668"/>
<dbReference type="RGD" id="3668">
    <property type="gene designation" value="Sgk1"/>
</dbReference>
<dbReference type="eggNOG" id="KOG0598">
    <property type="taxonomic scope" value="Eukaryota"/>
</dbReference>
<dbReference type="InParanoid" id="Q06226"/>
<dbReference type="PhylomeDB" id="Q06226"/>
<dbReference type="BRENDA" id="2.7.11.1">
    <property type="organism ID" value="5301"/>
</dbReference>
<dbReference type="Reactome" id="R-RNO-1257604">
    <property type="pathway name" value="PIP3 activates AKT signaling"/>
</dbReference>
<dbReference type="Reactome" id="R-RNO-2672351">
    <property type="pathway name" value="Stimuli-sensing channels"/>
</dbReference>
<dbReference type="Reactome" id="R-RNO-6804757">
    <property type="pathway name" value="Regulation of TP53 Degradation"/>
</dbReference>
<dbReference type="Reactome" id="R-RNO-9031628">
    <property type="pathway name" value="NGF-stimulated transcription"/>
</dbReference>
<dbReference type="PRO" id="PR:Q06226"/>
<dbReference type="Proteomes" id="UP000002494">
    <property type="component" value="Unplaced"/>
</dbReference>
<dbReference type="GO" id="GO:0005737">
    <property type="term" value="C:cytoplasm"/>
    <property type="evidence" value="ECO:0000318"/>
    <property type="project" value="GO_Central"/>
</dbReference>
<dbReference type="GO" id="GO:0005789">
    <property type="term" value="C:endoplasmic reticulum membrane"/>
    <property type="evidence" value="ECO:0007669"/>
    <property type="project" value="UniProtKB-SubCell"/>
</dbReference>
<dbReference type="GO" id="GO:0005739">
    <property type="term" value="C:mitochondrion"/>
    <property type="evidence" value="ECO:0007669"/>
    <property type="project" value="UniProtKB-SubCell"/>
</dbReference>
<dbReference type="GO" id="GO:0005634">
    <property type="term" value="C:nucleus"/>
    <property type="evidence" value="ECO:0000318"/>
    <property type="project" value="GO_Central"/>
</dbReference>
<dbReference type="GO" id="GO:0048471">
    <property type="term" value="C:perinuclear region of cytoplasm"/>
    <property type="evidence" value="ECO:0000314"/>
    <property type="project" value="RGD"/>
</dbReference>
<dbReference type="GO" id="GO:0005886">
    <property type="term" value="C:plasma membrane"/>
    <property type="evidence" value="ECO:0007669"/>
    <property type="project" value="UniProtKB-SubCell"/>
</dbReference>
<dbReference type="GO" id="GO:0043423">
    <property type="term" value="F:3-phosphoinositide-dependent protein kinase binding"/>
    <property type="evidence" value="ECO:0000353"/>
    <property type="project" value="RGD"/>
</dbReference>
<dbReference type="GO" id="GO:0005524">
    <property type="term" value="F:ATP binding"/>
    <property type="evidence" value="ECO:0007669"/>
    <property type="project" value="UniProtKB-KW"/>
</dbReference>
<dbReference type="GO" id="GO:0015459">
    <property type="term" value="F:potassium channel regulator activity"/>
    <property type="evidence" value="ECO:0000318"/>
    <property type="project" value="GO_Central"/>
</dbReference>
<dbReference type="GO" id="GO:0004672">
    <property type="term" value="F:protein kinase activity"/>
    <property type="evidence" value="ECO:0000266"/>
    <property type="project" value="RGD"/>
</dbReference>
<dbReference type="GO" id="GO:0106310">
    <property type="term" value="F:protein serine kinase activity"/>
    <property type="evidence" value="ECO:0007669"/>
    <property type="project" value="RHEA"/>
</dbReference>
<dbReference type="GO" id="GO:0004674">
    <property type="term" value="F:protein serine/threonine kinase activity"/>
    <property type="evidence" value="ECO:0000314"/>
    <property type="project" value="RGD"/>
</dbReference>
<dbReference type="GO" id="GO:0004712">
    <property type="term" value="F:protein serine/threonine/tyrosine kinase activity"/>
    <property type="evidence" value="ECO:0000266"/>
    <property type="project" value="RGD"/>
</dbReference>
<dbReference type="GO" id="GO:0048156">
    <property type="term" value="F:tau protein binding"/>
    <property type="evidence" value="ECO:0000353"/>
    <property type="project" value="RGD"/>
</dbReference>
<dbReference type="GO" id="GO:0006915">
    <property type="term" value="P:apoptotic process"/>
    <property type="evidence" value="ECO:0007669"/>
    <property type="project" value="UniProtKB-KW"/>
</dbReference>
<dbReference type="GO" id="GO:1904045">
    <property type="term" value="P:cellular response to aldosterone"/>
    <property type="evidence" value="ECO:0000266"/>
    <property type="project" value="RGD"/>
</dbReference>
<dbReference type="GO" id="GO:0032869">
    <property type="term" value="P:cellular response to insulin stimulus"/>
    <property type="evidence" value="ECO:0000315"/>
    <property type="project" value="MGI"/>
</dbReference>
<dbReference type="GO" id="GO:0006974">
    <property type="term" value="P:DNA damage response"/>
    <property type="evidence" value="ECO:0000266"/>
    <property type="project" value="RGD"/>
</dbReference>
<dbReference type="GO" id="GO:0035556">
    <property type="term" value="P:intracellular signal transduction"/>
    <property type="evidence" value="ECO:0000318"/>
    <property type="project" value="GO_Central"/>
</dbReference>
<dbReference type="GO" id="GO:0006883">
    <property type="term" value="P:intracellular sodium ion homeostasis"/>
    <property type="evidence" value="ECO:0000314"/>
    <property type="project" value="RGD"/>
</dbReference>
<dbReference type="GO" id="GO:0007616">
    <property type="term" value="P:long-term memory"/>
    <property type="evidence" value="ECO:0000315"/>
    <property type="project" value="RGD"/>
</dbReference>
<dbReference type="GO" id="GO:0007019">
    <property type="term" value="P:microtubule depolymerization"/>
    <property type="evidence" value="ECO:0000314"/>
    <property type="project" value="RGD"/>
</dbReference>
<dbReference type="GO" id="GO:0043066">
    <property type="term" value="P:negative regulation of apoptotic process"/>
    <property type="evidence" value="ECO:0000315"/>
    <property type="project" value="RGD"/>
</dbReference>
<dbReference type="GO" id="GO:0031115">
    <property type="term" value="P:negative regulation of microtubule polymerization"/>
    <property type="evidence" value="ECO:0000314"/>
    <property type="project" value="RGD"/>
</dbReference>
<dbReference type="GO" id="GO:0048812">
    <property type="term" value="P:neuron projection morphogenesis"/>
    <property type="evidence" value="ECO:0000314"/>
    <property type="project" value="RGD"/>
</dbReference>
<dbReference type="GO" id="GO:0030307">
    <property type="term" value="P:positive regulation of cell growth"/>
    <property type="evidence" value="ECO:0000314"/>
    <property type="project" value="RGD"/>
</dbReference>
<dbReference type="GO" id="GO:0050775">
    <property type="term" value="P:positive regulation of dendrite morphogenesis"/>
    <property type="evidence" value="ECO:0000315"/>
    <property type="project" value="RGD"/>
</dbReference>
<dbReference type="GO" id="GO:0010765">
    <property type="term" value="P:positive regulation of sodium ion transport"/>
    <property type="evidence" value="ECO:0000315"/>
    <property type="project" value="MGI"/>
</dbReference>
<dbReference type="GO" id="GO:0032880">
    <property type="term" value="P:regulation of protein localization"/>
    <property type="evidence" value="ECO:0000315"/>
    <property type="project" value="MGI"/>
</dbReference>
<dbReference type="GO" id="GO:0008542">
    <property type="term" value="P:visual learning"/>
    <property type="evidence" value="ECO:0000315"/>
    <property type="project" value="RGD"/>
</dbReference>
<dbReference type="CDD" id="cd05575">
    <property type="entry name" value="STKc_SGK"/>
    <property type="match status" value="1"/>
</dbReference>
<dbReference type="FunFam" id="1.10.510.10:FF:000065">
    <property type="entry name" value="Non-specific serine/threonine protein kinase"/>
    <property type="match status" value="1"/>
</dbReference>
<dbReference type="FunFam" id="3.30.200.20:FF:000030">
    <property type="entry name" value="Non-specific serine/threonine protein kinase"/>
    <property type="match status" value="1"/>
</dbReference>
<dbReference type="Gene3D" id="3.30.200.20">
    <property type="entry name" value="Phosphorylase Kinase, domain 1"/>
    <property type="match status" value="1"/>
</dbReference>
<dbReference type="Gene3D" id="1.10.510.10">
    <property type="entry name" value="Transferase(Phosphotransferase) domain 1"/>
    <property type="match status" value="1"/>
</dbReference>
<dbReference type="InterPro" id="IPR000961">
    <property type="entry name" value="AGC-kinase_C"/>
</dbReference>
<dbReference type="InterPro" id="IPR011009">
    <property type="entry name" value="Kinase-like_dom_sf"/>
</dbReference>
<dbReference type="InterPro" id="IPR017892">
    <property type="entry name" value="Pkinase_C"/>
</dbReference>
<dbReference type="InterPro" id="IPR000719">
    <property type="entry name" value="Prot_kinase_dom"/>
</dbReference>
<dbReference type="InterPro" id="IPR017441">
    <property type="entry name" value="Protein_kinase_ATP_BS"/>
</dbReference>
<dbReference type="InterPro" id="IPR008271">
    <property type="entry name" value="Ser/Thr_kinase_AS"/>
</dbReference>
<dbReference type="PANTHER" id="PTHR24351">
    <property type="entry name" value="RIBOSOMAL PROTEIN S6 KINASE"/>
    <property type="match status" value="1"/>
</dbReference>
<dbReference type="Pfam" id="PF00069">
    <property type="entry name" value="Pkinase"/>
    <property type="match status" value="1"/>
</dbReference>
<dbReference type="Pfam" id="PF00433">
    <property type="entry name" value="Pkinase_C"/>
    <property type="match status" value="1"/>
</dbReference>
<dbReference type="SMART" id="SM00133">
    <property type="entry name" value="S_TK_X"/>
    <property type="match status" value="1"/>
</dbReference>
<dbReference type="SMART" id="SM00220">
    <property type="entry name" value="S_TKc"/>
    <property type="match status" value="1"/>
</dbReference>
<dbReference type="SUPFAM" id="SSF56112">
    <property type="entry name" value="Protein kinase-like (PK-like)"/>
    <property type="match status" value="1"/>
</dbReference>
<dbReference type="PROSITE" id="PS51285">
    <property type="entry name" value="AGC_KINASE_CTER"/>
    <property type="match status" value="1"/>
</dbReference>
<dbReference type="PROSITE" id="PS00107">
    <property type="entry name" value="PROTEIN_KINASE_ATP"/>
    <property type="match status" value="1"/>
</dbReference>
<dbReference type="PROSITE" id="PS50011">
    <property type="entry name" value="PROTEIN_KINASE_DOM"/>
    <property type="match status" value="1"/>
</dbReference>
<dbReference type="PROSITE" id="PS00108">
    <property type="entry name" value="PROTEIN_KINASE_ST"/>
    <property type="match status" value="1"/>
</dbReference>
<sequence>MTVKTEAARSTLTYSRMRGMVAILIAFMKQRRMGLNDFIQKLANNSYACKHPEVQSYLKISQPQEPELMNANPSPPPSPSQQINLGPSSNPHAKPSDFHFLKVIGKGSFGKVLLARHKAEEAFYAVKVLQKKAILKKKEEKHIMSERNVLLKNVKHPFLVGLHFSFQTADKLYFVLDYINGGELFYHLQRERCFLEPRARFYAAEIASALGYLHSLNIVYRDLKPENILLDSQGHIVLTDFGLCKENIEHNGTTSTFCGTPEYLAPEVLHKQPYDRTVDWWCLGAVLYEMLYGLPPFYSRNTAEMYDNILNKPLQLKNITNSARHLLEGLLQKDRTKRLGAKDDFMEIKSHIFFSLINWDDLINKKITPPFNPNVSGPSDLRHFDPEFTEEPVPSSIGRSPDSILVTASVKEAAEAFLGFSYAPPMDSFL</sequence>
<protein>
    <recommendedName>
        <fullName>Serine/threonine-protein kinase Sgk1</fullName>
        <ecNumber>2.7.11.1</ecNumber>
    </recommendedName>
    <alternativeName>
        <fullName>Serum/glucocorticoid-regulated kinase 1</fullName>
    </alternativeName>
</protein>
<proteinExistence type="evidence at protein level"/>
<accession>Q06226</accession>
<keyword id="KW-0053">Apoptosis</keyword>
<keyword id="KW-0067">ATP-binding</keyword>
<keyword id="KW-1003">Cell membrane</keyword>
<keyword id="KW-0963">Cytoplasm</keyword>
<keyword id="KW-1015">Disulfide bond</keyword>
<keyword id="KW-0256">Endoplasmic reticulum</keyword>
<keyword id="KW-0418">Kinase</keyword>
<keyword id="KW-0472">Membrane</keyword>
<keyword id="KW-0496">Mitochondrion</keyword>
<keyword id="KW-0547">Nucleotide-binding</keyword>
<keyword id="KW-0539">Nucleus</keyword>
<keyword id="KW-0597">Phosphoprotein</keyword>
<keyword id="KW-1185">Reference proteome</keyword>
<keyword id="KW-0723">Serine/threonine-protein kinase</keyword>
<keyword id="KW-0346">Stress response</keyword>
<keyword id="KW-0808">Transferase</keyword>
<keyword id="KW-0832">Ubl conjugation</keyword>
<organism>
    <name type="scientific">Rattus norvegicus</name>
    <name type="common">Rat</name>
    <dbReference type="NCBI Taxonomy" id="10116"/>
    <lineage>
        <taxon>Eukaryota</taxon>
        <taxon>Metazoa</taxon>
        <taxon>Chordata</taxon>
        <taxon>Craniata</taxon>
        <taxon>Vertebrata</taxon>
        <taxon>Euteleostomi</taxon>
        <taxon>Mammalia</taxon>
        <taxon>Eutheria</taxon>
        <taxon>Euarchontoglires</taxon>
        <taxon>Glires</taxon>
        <taxon>Rodentia</taxon>
        <taxon>Myomorpha</taxon>
        <taxon>Muroidea</taxon>
        <taxon>Muridae</taxon>
        <taxon>Murinae</taxon>
        <taxon>Rattus</taxon>
    </lineage>
</organism>
<name>SGK1_RAT</name>